<protein>
    <recommendedName>
        <fullName evidence="1">1,4-dihydroxy-2-naphthoyl-CoA hydrolase</fullName>
        <shortName evidence="1">DHNA-CoA hydrolase</shortName>
        <ecNumber evidence="1">3.1.2.28</ecNumber>
    </recommendedName>
    <alternativeName>
        <fullName evidence="1">DHNA-CoA thioesterase</fullName>
    </alternativeName>
</protein>
<evidence type="ECO:0000255" key="1">
    <source>
        <dbReference type="HAMAP-Rule" id="MF_02101"/>
    </source>
</evidence>
<accession>B1XL26</accession>
<name>DNCH_PICP2</name>
<comment type="function">
    <text evidence="1">Catalyzes the hydrolysis of 1,4-dihydroxy-2-naphthoyl-CoA (DHNA-CoA) to 1,4-dihydroxy-2-naphthoate (DHNA), a reaction involved in phylloquinone (vitamin K1) biosynthesis.</text>
</comment>
<comment type="catalytic activity">
    <reaction evidence="1">
        <text>1,4-dihydroxy-2-naphthoyl-CoA + H2O = 1,4-dihydroxy-2-naphthoate + CoA + H(+)</text>
        <dbReference type="Rhea" id="RHEA:26309"/>
        <dbReference type="ChEBI" id="CHEBI:11173"/>
        <dbReference type="ChEBI" id="CHEBI:15377"/>
        <dbReference type="ChEBI" id="CHEBI:15378"/>
        <dbReference type="ChEBI" id="CHEBI:57287"/>
        <dbReference type="ChEBI" id="CHEBI:58897"/>
        <dbReference type="EC" id="3.1.2.28"/>
    </reaction>
</comment>
<comment type="pathway">
    <text evidence="1">Cofactor biosynthesis; phylloquinone biosynthesis.</text>
</comment>
<comment type="pathway">
    <text evidence="1">Quinol/quinone metabolism; 1,4-dihydroxy-2-naphthoate biosynthesis; 1,4-dihydroxy-2-naphthoate from chorismate: step 7/7.</text>
</comment>
<comment type="similarity">
    <text evidence="1">Belongs to the 4-hydroxybenzoyl-CoA thioesterase family. DHNA-CoA hydrolase subfamily.</text>
</comment>
<gene>
    <name type="ordered locus">SYNPCC7002_A1284</name>
</gene>
<feature type="chain" id="PRO_0000377029" description="1,4-dihydroxy-2-naphthoyl-CoA hydrolase">
    <location>
        <begin position="1"/>
        <end position="146"/>
    </location>
</feature>
<feature type="active site" evidence="1">
    <location>
        <position position="15"/>
    </location>
</feature>
<proteinExistence type="inferred from homology"/>
<organism>
    <name type="scientific">Picosynechococcus sp. (strain ATCC 27264 / PCC 7002 / PR-6)</name>
    <name type="common">Agmenellum quadruplicatum</name>
    <dbReference type="NCBI Taxonomy" id="32049"/>
    <lineage>
        <taxon>Bacteria</taxon>
        <taxon>Bacillati</taxon>
        <taxon>Cyanobacteriota</taxon>
        <taxon>Cyanophyceae</taxon>
        <taxon>Oscillatoriophycideae</taxon>
        <taxon>Chroococcales</taxon>
        <taxon>Geminocystaceae</taxon>
        <taxon>Picosynechococcus</taxon>
    </lineage>
</organism>
<sequence>MAYAYRRTIHLADTDAAGVVYFAQLLHICHEAYEICLIGNGMDWSGLLREGTVALPIVHSAIDFLRPITWGDRLDIQLYPELENSRQFKISYRIFKENQDSPPESPLATALTRHVAINPRTRQRCSLPPVVETWLRNAPKIEDSKI</sequence>
<keyword id="KW-0378">Hydrolase</keyword>
<keyword id="KW-1185">Reference proteome</keyword>
<dbReference type="EC" id="3.1.2.28" evidence="1"/>
<dbReference type="EMBL" id="CP000951">
    <property type="protein sequence ID" value="ACA99281.1"/>
    <property type="molecule type" value="Genomic_DNA"/>
</dbReference>
<dbReference type="RefSeq" id="WP_012306904.1">
    <property type="nucleotide sequence ID" value="NZ_JAHHPU010000001.1"/>
</dbReference>
<dbReference type="SMR" id="B1XL26"/>
<dbReference type="STRING" id="32049.SYNPCC7002_A1284"/>
<dbReference type="KEGG" id="syp:SYNPCC7002_A1284"/>
<dbReference type="eggNOG" id="COG0824">
    <property type="taxonomic scope" value="Bacteria"/>
</dbReference>
<dbReference type="HOGENOM" id="CLU_101141_5_3_3"/>
<dbReference type="UniPathway" id="UPA00995"/>
<dbReference type="UniPathway" id="UPA01057">
    <property type="reaction ID" value="UER01033"/>
</dbReference>
<dbReference type="Proteomes" id="UP000001688">
    <property type="component" value="Chromosome"/>
</dbReference>
<dbReference type="GO" id="GO:0061522">
    <property type="term" value="F:1,4-dihydroxy-2-naphthoyl-CoA thioesterase activity"/>
    <property type="evidence" value="ECO:0007669"/>
    <property type="project" value="UniProtKB-EC"/>
</dbReference>
<dbReference type="GO" id="GO:0042372">
    <property type="term" value="P:phylloquinone biosynthetic process"/>
    <property type="evidence" value="ECO:0007669"/>
    <property type="project" value="UniProtKB-UniRule"/>
</dbReference>
<dbReference type="CDD" id="cd00586">
    <property type="entry name" value="4HBT"/>
    <property type="match status" value="1"/>
</dbReference>
<dbReference type="Gene3D" id="3.10.129.10">
    <property type="entry name" value="Hotdog Thioesterase"/>
    <property type="match status" value="1"/>
</dbReference>
<dbReference type="HAMAP" id="MF_02101">
    <property type="entry name" value="DHNA_CoA_hydrolase"/>
    <property type="match status" value="1"/>
</dbReference>
<dbReference type="InterPro" id="IPR022829">
    <property type="entry name" value="DHNA_CoA_hydrolase"/>
</dbReference>
<dbReference type="InterPro" id="IPR029069">
    <property type="entry name" value="HotDog_dom_sf"/>
</dbReference>
<dbReference type="Pfam" id="PF13279">
    <property type="entry name" value="4HBT_2"/>
    <property type="match status" value="1"/>
</dbReference>
<dbReference type="SUPFAM" id="SSF54637">
    <property type="entry name" value="Thioesterase/thiol ester dehydrase-isomerase"/>
    <property type="match status" value="1"/>
</dbReference>
<reference key="1">
    <citation type="submission" date="2008-02" db="EMBL/GenBank/DDBJ databases">
        <title>Complete sequence of Synechococcus sp. PCC 7002.</title>
        <authorList>
            <person name="Li T."/>
            <person name="Zhao J."/>
            <person name="Zhao C."/>
            <person name="Liu Z."/>
            <person name="Zhao F."/>
            <person name="Marquardt J."/>
            <person name="Nomura C.T."/>
            <person name="Persson S."/>
            <person name="Detter J.C."/>
            <person name="Richardson P.M."/>
            <person name="Lanz C."/>
            <person name="Schuster S.C."/>
            <person name="Wang J."/>
            <person name="Li S."/>
            <person name="Huang X."/>
            <person name="Cai T."/>
            <person name="Yu Z."/>
            <person name="Luo J."/>
            <person name="Zhao J."/>
            <person name="Bryant D.A."/>
        </authorList>
    </citation>
    <scope>NUCLEOTIDE SEQUENCE [LARGE SCALE GENOMIC DNA]</scope>
    <source>
        <strain>ATCC 27264 / PCC 7002 / PR-6</strain>
    </source>
</reference>